<keyword id="KW-0997">Cell inner membrane</keyword>
<keyword id="KW-1003">Cell membrane</keyword>
<keyword id="KW-0472">Membrane</keyword>
<keyword id="KW-0812">Transmembrane</keyword>
<keyword id="KW-1133">Transmembrane helix</keyword>
<proteinExistence type="inferred from homology"/>
<name>YCJF_ECOUT</name>
<evidence type="ECO:0000255" key="1">
    <source>
        <dbReference type="HAMAP-Rule" id="MF_01085"/>
    </source>
</evidence>
<reference key="1">
    <citation type="journal article" date="2006" name="Proc. Natl. Acad. Sci. U.S.A.">
        <title>Identification of genes subject to positive selection in uropathogenic strains of Escherichia coli: a comparative genomics approach.</title>
        <authorList>
            <person name="Chen S.L."/>
            <person name="Hung C.-S."/>
            <person name="Xu J."/>
            <person name="Reigstad C.S."/>
            <person name="Magrini V."/>
            <person name="Sabo A."/>
            <person name="Blasiar D."/>
            <person name="Bieri T."/>
            <person name="Meyer R.R."/>
            <person name="Ozersky P."/>
            <person name="Armstrong J.R."/>
            <person name="Fulton R.S."/>
            <person name="Latreille J.P."/>
            <person name="Spieth J."/>
            <person name="Hooton T.M."/>
            <person name="Mardis E.R."/>
            <person name="Hultgren S.J."/>
            <person name="Gordon J.I."/>
        </authorList>
    </citation>
    <scope>NUCLEOTIDE SEQUENCE [LARGE SCALE GENOMIC DNA]</scope>
    <source>
        <strain>UTI89 / UPEC</strain>
    </source>
</reference>
<dbReference type="EMBL" id="CP000243">
    <property type="protein sequence ID" value="ABE07071.1"/>
    <property type="molecule type" value="Genomic_DNA"/>
</dbReference>
<dbReference type="RefSeq" id="WP_000138728.1">
    <property type="nucleotide sequence ID" value="NZ_CP064825.1"/>
</dbReference>
<dbReference type="SMR" id="Q1RC43"/>
<dbReference type="KEGG" id="eci:UTI89_C1593"/>
<dbReference type="HOGENOM" id="CLU_057693_2_0_6"/>
<dbReference type="Proteomes" id="UP000001952">
    <property type="component" value="Chromosome"/>
</dbReference>
<dbReference type="GO" id="GO:0005886">
    <property type="term" value="C:plasma membrane"/>
    <property type="evidence" value="ECO:0007669"/>
    <property type="project" value="UniProtKB-SubCell"/>
</dbReference>
<dbReference type="HAMAP" id="MF_01085">
    <property type="entry name" value="UPF0283"/>
    <property type="match status" value="1"/>
</dbReference>
<dbReference type="InterPro" id="IPR021147">
    <property type="entry name" value="DUF697"/>
</dbReference>
<dbReference type="InterPro" id="IPR006507">
    <property type="entry name" value="UPF0283"/>
</dbReference>
<dbReference type="NCBIfam" id="TIGR01620">
    <property type="entry name" value="hyp_HI0043"/>
    <property type="match status" value="1"/>
</dbReference>
<dbReference type="PANTHER" id="PTHR39342">
    <property type="entry name" value="UPF0283 MEMBRANE PROTEIN YCJF"/>
    <property type="match status" value="1"/>
</dbReference>
<dbReference type="PANTHER" id="PTHR39342:SF1">
    <property type="entry name" value="UPF0283 MEMBRANE PROTEIN YCJF"/>
    <property type="match status" value="1"/>
</dbReference>
<dbReference type="Pfam" id="PF05128">
    <property type="entry name" value="DUF697"/>
    <property type="match status" value="1"/>
</dbReference>
<protein>
    <recommendedName>
        <fullName evidence="1">UPF0283 membrane protein YcjF</fullName>
    </recommendedName>
</protein>
<comment type="subcellular location">
    <subcellularLocation>
        <location evidence="1">Cell inner membrane</location>
        <topology evidence="1">Multi-pass membrane protein</topology>
    </subcellularLocation>
</comment>
<comment type="similarity">
    <text evidence="1">Belongs to the UPF0283 family.</text>
</comment>
<accession>Q1RC43</accession>
<organism>
    <name type="scientific">Escherichia coli (strain UTI89 / UPEC)</name>
    <dbReference type="NCBI Taxonomy" id="364106"/>
    <lineage>
        <taxon>Bacteria</taxon>
        <taxon>Pseudomonadati</taxon>
        <taxon>Pseudomonadota</taxon>
        <taxon>Gammaproteobacteria</taxon>
        <taxon>Enterobacterales</taxon>
        <taxon>Enterobacteriaceae</taxon>
        <taxon>Escherichia</taxon>
    </lineage>
</organism>
<sequence>MTEPLKPRIDFDGPLEVDQNPKFRAQQTFDENQAQNFAPATLDEAQEEEGQVEAVMDAALRPKRSLWRKMVMGGLALFGASVVGQGVQWTMNAWQTQDWVALGGCAAGALIIGAGVGSVVTEWRRLWRLRQRAHERDEARDLLHSHGTGKGRAFCEKLAQQAGIDQSHPALQRWYASIHETQNDREVVSLYAHLVQPVLDAQARREISRSAAESTLMIAVSPLALVDMAFIAWRNLRLINRIATLYGIELGYYSRLRLFKLVLLNIAFAGASELVREVGMDWMSQDLAARLSTRAAQGIGAGLLTARLGIKAMELCRPLPWIDDDKPRLGDFRRQLIGQVKETLQKGKTPSEK</sequence>
<gene>
    <name evidence="1" type="primary">ycjF</name>
    <name type="ordered locus">UTI89_C1593</name>
</gene>
<feature type="chain" id="PRO_1000064839" description="UPF0283 membrane protein YcjF">
    <location>
        <begin position="1"/>
        <end position="353"/>
    </location>
</feature>
<feature type="transmembrane region" description="Helical" evidence="1">
    <location>
        <begin position="70"/>
        <end position="90"/>
    </location>
</feature>
<feature type="transmembrane region" description="Helical" evidence="1">
    <location>
        <begin position="100"/>
        <end position="120"/>
    </location>
</feature>
<feature type="transmembrane region" description="Helical" evidence="1">
    <location>
        <begin position="213"/>
        <end position="233"/>
    </location>
</feature>